<gene>
    <name evidence="1" type="primary">allA</name>
    <name type="synonym">glxA2</name>
    <name type="synonym">ybbT</name>
    <name type="ordered locus">b0505</name>
    <name type="ordered locus">JW0493</name>
</gene>
<proteinExistence type="evidence at protein level"/>
<organism>
    <name type="scientific">Escherichia coli (strain K12)</name>
    <dbReference type="NCBI Taxonomy" id="83333"/>
    <lineage>
        <taxon>Bacteria</taxon>
        <taxon>Pseudomonadati</taxon>
        <taxon>Pseudomonadota</taxon>
        <taxon>Gammaproteobacteria</taxon>
        <taxon>Enterobacterales</taxon>
        <taxon>Enterobacteriaceae</taxon>
        <taxon>Escherichia</taxon>
    </lineage>
</organism>
<protein>
    <recommendedName>
        <fullName evidence="1">Ureidoglycolate lyase</fullName>
        <ecNumber evidence="1">4.3.2.3</ecNumber>
    </recommendedName>
    <alternativeName>
        <fullName evidence="1">Ureidoglycolatase</fullName>
    </alternativeName>
    <alternativeName>
        <fullName>Ureidoglycolate hydrolase</fullName>
    </alternativeName>
</protein>
<dbReference type="EC" id="4.3.2.3" evidence="1"/>
<dbReference type="EMBL" id="U89024">
    <property type="protein sequence ID" value="AAB93846.1"/>
    <property type="molecule type" value="Genomic_DNA"/>
</dbReference>
<dbReference type="EMBL" id="U82664">
    <property type="protein sequence ID" value="AAB40258.1"/>
    <property type="molecule type" value="Genomic_DNA"/>
</dbReference>
<dbReference type="EMBL" id="U00096">
    <property type="protein sequence ID" value="AAC73607.1"/>
    <property type="molecule type" value="Genomic_DNA"/>
</dbReference>
<dbReference type="EMBL" id="AP009048">
    <property type="protein sequence ID" value="BAE76283.1"/>
    <property type="molecule type" value="Genomic_DNA"/>
</dbReference>
<dbReference type="PIR" id="H64781">
    <property type="entry name" value="H64781"/>
</dbReference>
<dbReference type="RefSeq" id="NP_415038.1">
    <property type="nucleotide sequence ID" value="NC_000913.3"/>
</dbReference>
<dbReference type="RefSeq" id="WP_000776377.1">
    <property type="nucleotide sequence ID" value="NZ_LN832404.1"/>
</dbReference>
<dbReference type="PDB" id="1XSQ">
    <property type="method" value="X-ray"/>
    <property type="resolution" value="1.60 A"/>
    <property type="chains" value="A/B=1-160"/>
</dbReference>
<dbReference type="PDBsum" id="1XSQ"/>
<dbReference type="SMR" id="P77731"/>
<dbReference type="BioGRID" id="4259861">
    <property type="interactions" value="18"/>
</dbReference>
<dbReference type="FunCoup" id="P77731">
    <property type="interactions" value="88"/>
</dbReference>
<dbReference type="IntAct" id="P77731">
    <property type="interactions" value="4"/>
</dbReference>
<dbReference type="STRING" id="511145.b0505"/>
<dbReference type="PaxDb" id="511145-b0505"/>
<dbReference type="EnsemblBacteria" id="AAC73607">
    <property type="protein sequence ID" value="AAC73607"/>
    <property type="gene ID" value="b0505"/>
</dbReference>
<dbReference type="GeneID" id="945141"/>
<dbReference type="KEGG" id="ecj:JW0493"/>
<dbReference type="KEGG" id="eco:b0505"/>
<dbReference type="KEGG" id="ecoc:C3026_02480"/>
<dbReference type="PATRIC" id="fig|1411691.4.peg.1772"/>
<dbReference type="EchoBASE" id="EB3381"/>
<dbReference type="eggNOG" id="COG3194">
    <property type="taxonomic scope" value="Bacteria"/>
</dbReference>
<dbReference type="HOGENOM" id="CLU_070848_1_1_6"/>
<dbReference type="InParanoid" id="P77731"/>
<dbReference type="OMA" id="ECYFEPG"/>
<dbReference type="OrthoDB" id="9804602at2"/>
<dbReference type="PhylomeDB" id="P77731"/>
<dbReference type="BioCyc" id="EcoCyc:G6275-MONOMER"/>
<dbReference type="BioCyc" id="MetaCyc:G6275-MONOMER"/>
<dbReference type="UniPathway" id="UPA00395"/>
<dbReference type="EvolutionaryTrace" id="P77731"/>
<dbReference type="PRO" id="PR:P77731"/>
<dbReference type="Proteomes" id="UP000000625">
    <property type="component" value="Chromosome"/>
</dbReference>
<dbReference type="GO" id="GO:0004848">
    <property type="term" value="F:ureidoglycolate hydrolase activity"/>
    <property type="evidence" value="ECO:0007669"/>
    <property type="project" value="InterPro"/>
</dbReference>
<dbReference type="GO" id="GO:0050385">
    <property type="term" value="F:ureidoglycolate lyase activity"/>
    <property type="evidence" value="ECO:0000314"/>
    <property type="project" value="EcoCyc"/>
</dbReference>
<dbReference type="GO" id="GO:0000256">
    <property type="term" value="P:allantoin catabolic process"/>
    <property type="evidence" value="ECO:0007669"/>
    <property type="project" value="UniProtKB-UniRule"/>
</dbReference>
<dbReference type="GO" id="GO:0006145">
    <property type="term" value="P:purine nucleobase catabolic process"/>
    <property type="evidence" value="ECO:0007669"/>
    <property type="project" value="UniProtKB-UniRule"/>
</dbReference>
<dbReference type="CDD" id="cd20298">
    <property type="entry name" value="cupin_UAH"/>
    <property type="match status" value="1"/>
</dbReference>
<dbReference type="FunFam" id="2.60.120.480:FF:000001">
    <property type="entry name" value="Ureidoglycolate lyase"/>
    <property type="match status" value="1"/>
</dbReference>
<dbReference type="Gene3D" id="2.60.120.480">
    <property type="entry name" value="Ureidoglycolate hydrolase"/>
    <property type="match status" value="1"/>
</dbReference>
<dbReference type="HAMAP" id="MF_00616">
    <property type="entry name" value="Ureidogly_lyase"/>
    <property type="match status" value="1"/>
</dbReference>
<dbReference type="InterPro" id="IPR011051">
    <property type="entry name" value="RmlC_Cupin_sf"/>
</dbReference>
<dbReference type="InterPro" id="IPR047233">
    <property type="entry name" value="UAH_cupin"/>
</dbReference>
<dbReference type="InterPro" id="IPR007247">
    <property type="entry name" value="Ureidogly_lyase"/>
</dbReference>
<dbReference type="InterPro" id="IPR023525">
    <property type="entry name" value="Ureidogly_lyase_bac"/>
</dbReference>
<dbReference type="InterPro" id="IPR024060">
    <property type="entry name" value="Ureidoglycolate_lyase_dom_sf"/>
</dbReference>
<dbReference type="NCBIfam" id="NF002948">
    <property type="entry name" value="PRK03606.1-1"/>
    <property type="match status" value="1"/>
</dbReference>
<dbReference type="NCBIfam" id="NF009932">
    <property type="entry name" value="PRK13395.1"/>
    <property type="match status" value="1"/>
</dbReference>
<dbReference type="PANTHER" id="PTHR21221">
    <property type="entry name" value="UREIDOGLYCOLATE HYDROLASE"/>
    <property type="match status" value="1"/>
</dbReference>
<dbReference type="PANTHER" id="PTHR21221:SF1">
    <property type="entry name" value="UREIDOGLYCOLATE LYASE"/>
    <property type="match status" value="1"/>
</dbReference>
<dbReference type="Pfam" id="PF04115">
    <property type="entry name" value="Ureidogly_lyase"/>
    <property type="match status" value="1"/>
</dbReference>
<dbReference type="PIRSF" id="PIRSF017306">
    <property type="entry name" value="Ureidogly_hydro"/>
    <property type="match status" value="1"/>
</dbReference>
<dbReference type="SUPFAM" id="SSF51182">
    <property type="entry name" value="RmlC-like cupins"/>
    <property type="match status" value="1"/>
</dbReference>
<sequence>MKLQVLPLSQEAFSAYGDVIETQQRDFFHINNGLVERYHDLALVEILEQDCTLISINRAQPANLPLTIHELERHPLGTQAFIPMKGEVFVVVVALGDDKPDLSTLRAFITNGEQGVNYHRNVWHHPLFAWQRVTDFLTIDRGGSDNCDVESIPEQELCFA</sequence>
<evidence type="ECO:0000255" key="1">
    <source>
        <dbReference type="HAMAP-Rule" id="MF_00616"/>
    </source>
</evidence>
<evidence type="ECO:0000269" key="2">
    <source>
    </source>
</evidence>
<evidence type="ECO:0000269" key="3">
    <source>
    </source>
</evidence>
<evidence type="ECO:0000269" key="4">
    <source ref="6"/>
</evidence>
<evidence type="ECO:0007829" key="5">
    <source>
        <dbReference type="PDB" id="1XSQ"/>
    </source>
</evidence>
<accession>P77731</accession>
<accession>Q2MBS3</accession>
<name>ALLA_ECOLI</name>
<feature type="chain" id="PRO_0000120547" description="Ureidoglycolate lyase">
    <location>
        <begin position="1"/>
        <end position="160"/>
    </location>
</feature>
<feature type="strand" evidence="5">
    <location>
        <begin position="2"/>
        <end position="7"/>
    </location>
</feature>
<feature type="helix" evidence="5">
    <location>
        <begin position="10"/>
        <end position="13"/>
    </location>
</feature>
<feature type="turn" evidence="5">
    <location>
        <begin position="14"/>
        <end position="16"/>
    </location>
</feature>
<feature type="strand" evidence="5">
    <location>
        <begin position="17"/>
        <end position="20"/>
    </location>
</feature>
<feature type="strand" evidence="5">
    <location>
        <begin position="36"/>
        <end position="44"/>
    </location>
</feature>
<feature type="strand" evidence="5">
    <location>
        <begin position="46"/>
        <end position="48"/>
    </location>
</feature>
<feature type="strand" evidence="5">
    <location>
        <begin position="52"/>
        <end position="59"/>
    </location>
</feature>
<feature type="strand" evidence="5">
    <location>
        <begin position="67"/>
        <end position="73"/>
    </location>
</feature>
<feature type="strand" evidence="5">
    <location>
        <begin position="79"/>
        <end position="85"/>
    </location>
</feature>
<feature type="strand" evidence="5">
    <location>
        <begin position="90"/>
        <end position="95"/>
    </location>
</feature>
<feature type="strand" evidence="5">
    <location>
        <begin position="97"/>
        <end position="99"/>
    </location>
</feature>
<feature type="strand" evidence="5">
    <location>
        <begin position="101"/>
        <end position="109"/>
    </location>
</feature>
<feature type="strand" evidence="5">
    <location>
        <begin position="115"/>
        <end position="118"/>
    </location>
</feature>
<feature type="strand" evidence="5">
    <location>
        <begin position="129"/>
        <end position="132"/>
    </location>
</feature>
<feature type="strand" evidence="5">
    <location>
        <begin position="134"/>
        <end position="140"/>
    </location>
</feature>
<feature type="strand" evidence="5">
    <location>
        <begin position="148"/>
        <end position="158"/>
    </location>
</feature>
<keyword id="KW-0002">3D-structure</keyword>
<keyword id="KW-0456">Lyase</keyword>
<keyword id="KW-0659">Purine metabolism</keyword>
<keyword id="KW-1185">Reference proteome</keyword>
<reference key="1">
    <citation type="journal article" date="1999" name="J. Bacteriol.">
        <title>Genetic analysis of a chromosomal region containing genes required for assimilation of allantoin nitrogen and linked glyoxylate metabolism in Escherichia coli.</title>
        <authorList>
            <person name="Cusa E."/>
            <person name="Obradors N."/>
            <person name="Baldoma L."/>
            <person name="Badia J."/>
            <person name="Aguilar J."/>
        </authorList>
    </citation>
    <scope>NUCLEOTIDE SEQUENCE [GENOMIC DNA]</scope>
    <scope>FUNCTION</scope>
    <source>
        <strain>K12 / ECL1</strain>
    </source>
</reference>
<reference key="2">
    <citation type="submission" date="1997-01" db="EMBL/GenBank/DDBJ databases">
        <title>Sequence of minutes 4-25 of Escherichia coli.</title>
        <authorList>
            <person name="Chung E."/>
            <person name="Allen E."/>
            <person name="Araujo R."/>
            <person name="Aparicio A.M."/>
            <person name="Davis K."/>
            <person name="Duncan M."/>
            <person name="Federspiel N."/>
            <person name="Hyman R."/>
            <person name="Kalman S."/>
            <person name="Komp C."/>
            <person name="Kurdi O."/>
            <person name="Lew H."/>
            <person name="Lin D."/>
            <person name="Namath A."/>
            <person name="Oefner P."/>
            <person name="Roberts D."/>
            <person name="Schramm S."/>
            <person name="Davis R.W."/>
        </authorList>
    </citation>
    <scope>NUCLEOTIDE SEQUENCE [LARGE SCALE GENOMIC DNA]</scope>
    <source>
        <strain>K12 / MG1655 / ATCC 47076</strain>
    </source>
</reference>
<reference key="3">
    <citation type="journal article" date="1997" name="Science">
        <title>The complete genome sequence of Escherichia coli K-12.</title>
        <authorList>
            <person name="Blattner F.R."/>
            <person name="Plunkett G. III"/>
            <person name="Bloch C.A."/>
            <person name="Perna N.T."/>
            <person name="Burland V."/>
            <person name="Riley M."/>
            <person name="Collado-Vides J."/>
            <person name="Glasner J.D."/>
            <person name="Rode C.K."/>
            <person name="Mayhew G.F."/>
            <person name="Gregor J."/>
            <person name="Davis N.W."/>
            <person name="Kirkpatrick H.A."/>
            <person name="Goeden M.A."/>
            <person name="Rose D.J."/>
            <person name="Mau B."/>
            <person name="Shao Y."/>
        </authorList>
    </citation>
    <scope>NUCLEOTIDE SEQUENCE [LARGE SCALE GENOMIC DNA]</scope>
    <source>
        <strain>K12 / MG1655 / ATCC 47076</strain>
    </source>
</reference>
<reference key="4">
    <citation type="journal article" date="2006" name="Mol. Syst. Biol.">
        <title>Highly accurate genome sequences of Escherichia coli K-12 strains MG1655 and W3110.</title>
        <authorList>
            <person name="Hayashi K."/>
            <person name="Morooka N."/>
            <person name="Yamamoto Y."/>
            <person name="Fujita K."/>
            <person name="Isono K."/>
            <person name="Choi S."/>
            <person name="Ohtsubo E."/>
            <person name="Baba T."/>
            <person name="Wanner B.L."/>
            <person name="Mori H."/>
            <person name="Horiuchi T."/>
        </authorList>
    </citation>
    <scope>NUCLEOTIDE SEQUENCE [LARGE SCALE GENOMIC DNA]</scope>
    <source>
        <strain>K12 / W3110 / ATCC 27325 / DSM 5911</strain>
    </source>
</reference>
<reference key="5">
    <citation type="journal article" date="2013" name="Database">
        <title>Ureidoglycolate hydrolase, amidohydrolase, lyase: how errors in biological databases are incorporated in scientific papers and vice versa.</title>
        <authorList>
            <person name="Percudani R."/>
            <person name="Carnevali D."/>
            <person name="Puggioni V."/>
        </authorList>
    </citation>
    <scope>CATALYTIC ACTIVITY</scope>
    <scope>COFACTOR</scope>
    <scope>FUNCTION</scope>
    <source>
        <strain>K12</strain>
    </source>
</reference>
<reference key="6">
    <citation type="submission" date="2005-01" db="PDB data bank">
        <title>Crystal structure of ureidoglycolate hydrolase from E.coli. Northeast structural genomics consortium target Et81.</title>
        <authorList>
            <consortium name="Northeast structural genomics consortium (NESG)"/>
        </authorList>
    </citation>
    <scope>X-RAY CRYSTALLOGRAPHY (1.6 ANGSTROMS)</scope>
    <scope>SUBUNIT</scope>
</reference>
<comment type="function">
    <text evidence="1 2 3">Catalyzes the catabolism of the allantoin degradation intermediate (S)-ureidoglycolate, generating urea and glyoxylate. Involved in the anaerobic utilization of allantoin as sole nitrogen source. Reinforces the induction of genes involved in the degradation of allantoin and glyoxylate by producing glyoxylate.</text>
</comment>
<comment type="catalytic activity">
    <reaction evidence="1 3">
        <text>(S)-ureidoglycolate = urea + glyoxylate</text>
        <dbReference type="Rhea" id="RHEA:11304"/>
        <dbReference type="ChEBI" id="CHEBI:16199"/>
        <dbReference type="ChEBI" id="CHEBI:36655"/>
        <dbReference type="ChEBI" id="CHEBI:57296"/>
        <dbReference type="EC" id="4.3.2.3"/>
    </reaction>
</comment>
<comment type="cofactor">
    <cofactor evidence="1 3">
        <name>Ni(2+)</name>
        <dbReference type="ChEBI" id="CHEBI:49786"/>
    </cofactor>
</comment>
<comment type="pathway">
    <text evidence="1">Nitrogen metabolism; (S)-allantoin degradation.</text>
</comment>
<comment type="subunit">
    <text evidence="1 4">Homodimer.</text>
</comment>
<comment type="induction">
    <text>By glyoxylate and allantoin under anaerobic conditions and by glyoxylate under aerobic conditions.</text>
</comment>
<comment type="similarity">
    <text evidence="1">Belongs to the ureidoglycolate lyase family.</text>
</comment>